<organism>
    <name type="scientific">Salmonella agona (strain SL483)</name>
    <dbReference type="NCBI Taxonomy" id="454166"/>
    <lineage>
        <taxon>Bacteria</taxon>
        <taxon>Pseudomonadati</taxon>
        <taxon>Pseudomonadota</taxon>
        <taxon>Gammaproteobacteria</taxon>
        <taxon>Enterobacterales</taxon>
        <taxon>Enterobacteriaceae</taxon>
        <taxon>Salmonella</taxon>
    </lineage>
</organism>
<protein>
    <recommendedName>
        <fullName evidence="1">Zinc transporter ZupT</fullName>
    </recommendedName>
</protein>
<accession>B5F683</accession>
<proteinExistence type="inferred from homology"/>
<comment type="function">
    <text evidence="1">Mediates zinc uptake. May also transport other divalent cations.</text>
</comment>
<comment type="catalytic activity">
    <reaction evidence="1">
        <text>Zn(2+)(in) = Zn(2+)(out)</text>
        <dbReference type="Rhea" id="RHEA:29351"/>
        <dbReference type="ChEBI" id="CHEBI:29105"/>
    </reaction>
</comment>
<comment type="subcellular location">
    <subcellularLocation>
        <location evidence="1">Cell inner membrane</location>
        <topology evidence="1">Multi-pass membrane protein</topology>
    </subcellularLocation>
</comment>
<comment type="similarity">
    <text evidence="1">Belongs to the ZIP transporter (TC 2.A.5) family. ZupT subfamily.</text>
</comment>
<keyword id="KW-0997">Cell inner membrane</keyword>
<keyword id="KW-1003">Cell membrane</keyword>
<keyword id="KW-0406">Ion transport</keyword>
<keyword id="KW-0408">Iron</keyword>
<keyword id="KW-0472">Membrane</keyword>
<keyword id="KW-0479">Metal-binding</keyword>
<keyword id="KW-0812">Transmembrane</keyword>
<keyword id="KW-1133">Transmembrane helix</keyword>
<keyword id="KW-0813">Transport</keyword>
<keyword id="KW-0862">Zinc</keyword>
<keyword id="KW-0864">Zinc transport</keyword>
<sequence>MSVPLILTLLAGAATFIGAFLGVLGQKPSNRVLAFSLGFAAGIMLLISLMEMLPAALDTEGMSPVLGYGMFIIGLLGYFGLDRLLPHAHPQDLVQKRQQPLPGSIKRTAILLTLGISLHNFPEGIATFVTASSNLELGFGIALAVALHNIPEGLAVAGPVYAATGSKRTAIFWAGISGMAEILGGVLAWLILGSLVSPIVMAAIMAAVAGIMVALSVDELMPLAKEIDPNNNPSYGVLCGMSIMGLSLVILQTIGIG</sequence>
<dbReference type="EMBL" id="CP001138">
    <property type="protein sequence ID" value="ACH50835.1"/>
    <property type="molecule type" value="Genomic_DNA"/>
</dbReference>
<dbReference type="RefSeq" id="WP_000115874.1">
    <property type="nucleotide sequence ID" value="NC_011149.1"/>
</dbReference>
<dbReference type="SMR" id="B5F683"/>
<dbReference type="KEGG" id="sea:SeAg_B3371"/>
<dbReference type="HOGENOM" id="CLU_015114_1_3_6"/>
<dbReference type="Proteomes" id="UP000008819">
    <property type="component" value="Chromosome"/>
</dbReference>
<dbReference type="GO" id="GO:0005886">
    <property type="term" value="C:plasma membrane"/>
    <property type="evidence" value="ECO:0007669"/>
    <property type="project" value="UniProtKB-SubCell"/>
</dbReference>
<dbReference type="GO" id="GO:0046872">
    <property type="term" value="F:metal ion binding"/>
    <property type="evidence" value="ECO:0007669"/>
    <property type="project" value="UniProtKB-KW"/>
</dbReference>
<dbReference type="GO" id="GO:0005385">
    <property type="term" value="F:zinc ion transmembrane transporter activity"/>
    <property type="evidence" value="ECO:0007669"/>
    <property type="project" value="UniProtKB-UniRule"/>
</dbReference>
<dbReference type="HAMAP" id="MF_00548">
    <property type="entry name" value="ZupT"/>
    <property type="match status" value="1"/>
</dbReference>
<dbReference type="InterPro" id="IPR003689">
    <property type="entry name" value="ZIP"/>
</dbReference>
<dbReference type="InterPro" id="IPR023498">
    <property type="entry name" value="Zn_transptr_ZupT"/>
</dbReference>
<dbReference type="NCBIfam" id="NF003243">
    <property type="entry name" value="PRK04201.1"/>
    <property type="match status" value="1"/>
</dbReference>
<dbReference type="PANTHER" id="PTHR11040:SF205">
    <property type="entry name" value="ZINC TRANSPORTER ZUPT"/>
    <property type="match status" value="1"/>
</dbReference>
<dbReference type="PANTHER" id="PTHR11040">
    <property type="entry name" value="ZINC/IRON TRANSPORTER"/>
    <property type="match status" value="1"/>
</dbReference>
<dbReference type="Pfam" id="PF02535">
    <property type="entry name" value="Zip"/>
    <property type="match status" value="2"/>
</dbReference>
<evidence type="ECO:0000255" key="1">
    <source>
        <dbReference type="HAMAP-Rule" id="MF_00548"/>
    </source>
</evidence>
<name>ZUPT_SALA4</name>
<reference key="1">
    <citation type="journal article" date="2011" name="J. Bacteriol.">
        <title>Comparative genomics of 28 Salmonella enterica isolates: evidence for CRISPR-mediated adaptive sublineage evolution.</title>
        <authorList>
            <person name="Fricke W.F."/>
            <person name="Mammel M.K."/>
            <person name="McDermott P.F."/>
            <person name="Tartera C."/>
            <person name="White D.G."/>
            <person name="Leclerc J.E."/>
            <person name="Ravel J."/>
            <person name="Cebula T.A."/>
        </authorList>
    </citation>
    <scope>NUCLEOTIDE SEQUENCE [LARGE SCALE GENOMIC DNA]</scope>
    <source>
        <strain>SL483</strain>
    </source>
</reference>
<gene>
    <name evidence="1" type="primary">zupT</name>
    <name type="ordered locus">SeAg_B3371</name>
</gene>
<feature type="chain" id="PRO_1000128960" description="Zinc transporter ZupT">
    <location>
        <begin position="1"/>
        <end position="257"/>
    </location>
</feature>
<feature type="transmembrane region" description="Helical" evidence="1">
    <location>
        <begin position="5"/>
        <end position="25"/>
    </location>
</feature>
<feature type="transmembrane region" description="Helical" evidence="1">
    <location>
        <begin position="32"/>
        <end position="52"/>
    </location>
</feature>
<feature type="transmembrane region" description="Helical" evidence="1">
    <location>
        <begin position="61"/>
        <end position="81"/>
    </location>
</feature>
<feature type="transmembrane region" description="Helical" evidence="1">
    <location>
        <begin position="109"/>
        <end position="129"/>
    </location>
</feature>
<feature type="transmembrane region" description="Helical" evidence="1">
    <location>
        <begin position="137"/>
        <end position="157"/>
    </location>
</feature>
<feature type="transmembrane region" description="Helical" evidence="1">
    <location>
        <begin position="171"/>
        <end position="191"/>
    </location>
</feature>
<feature type="transmembrane region" description="Helical" evidence="1">
    <location>
        <begin position="195"/>
        <end position="215"/>
    </location>
</feature>
<feature type="transmembrane region" description="Helical" evidence="1">
    <location>
        <begin position="236"/>
        <end position="256"/>
    </location>
</feature>
<feature type="binding site" description="M2 metal binding site" evidence="1">
    <location>
        <position position="120"/>
    </location>
    <ligand>
        <name>Fe(2+)</name>
        <dbReference type="ChEBI" id="CHEBI:29033"/>
    </ligand>
</feature>
<feature type="binding site" description="M2 metal binding site" evidence="1">
    <location>
        <position position="123"/>
    </location>
    <ligand>
        <name>Fe(2+)</name>
        <dbReference type="ChEBI" id="CHEBI:29033"/>
    </ligand>
</feature>
<feature type="binding site" description="M1 metal binding site" evidence="1">
    <location>
        <position position="123"/>
    </location>
    <ligand>
        <name>Zn(2+)</name>
        <dbReference type="ChEBI" id="CHEBI:29105"/>
    </ligand>
</feature>
<feature type="binding site" description="M1 metal binding site" evidence="1">
    <location>
        <position position="148"/>
    </location>
    <ligand>
        <name>Zn(2+)</name>
        <dbReference type="ChEBI" id="CHEBI:29105"/>
    </ligand>
</feature>
<feature type="binding site" description="M2 metal binding site" evidence="1">
    <location>
        <position position="149"/>
    </location>
    <ligand>
        <name>Fe(2+)</name>
        <dbReference type="ChEBI" id="CHEBI:29033"/>
    </ligand>
</feature>
<feature type="binding site" description="M2 metal binding site" evidence="1">
    <location>
        <position position="152"/>
    </location>
    <ligand>
        <name>Fe(2+)</name>
        <dbReference type="ChEBI" id="CHEBI:29033"/>
    </ligand>
</feature>
<feature type="binding site" description="M1 metal binding site" evidence="1">
    <location>
        <position position="152"/>
    </location>
    <ligand>
        <name>Zn(2+)</name>
        <dbReference type="ChEBI" id="CHEBI:29105"/>
    </ligand>
</feature>
<feature type="binding site" description="M2 metal binding site" evidence="1">
    <location>
        <position position="181"/>
    </location>
    <ligand>
        <name>Fe(2+)</name>
        <dbReference type="ChEBI" id="CHEBI:29033"/>
    </ligand>
</feature>